<proteinExistence type="inferred from homology"/>
<evidence type="ECO:0000250" key="1">
    <source>
        <dbReference type="UniProtKB" id="Q04401"/>
    </source>
</evidence>
<evidence type="ECO:0000250" key="2">
    <source>
        <dbReference type="UniProtKB" id="Q8SZ16"/>
    </source>
</evidence>
<evidence type="ECO:0000255" key="3"/>
<evidence type="ECO:0000256" key="4">
    <source>
        <dbReference type="SAM" id="MobiDB-lite"/>
    </source>
</evidence>
<evidence type="ECO:0000305" key="5"/>
<name>SDHF3_DICDI</name>
<protein>
    <recommendedName>
        <fullName evidence="1">Succinate dehydrogenase assembly factor 3, mitochondrial</fullName>
        <shortName evidence="1">SDH assembly factor 3</shortName>
        <shortName evidence="1">SDHAF3</shortName>
    </recommendedName>
</protein>
<sequence length="135" mass="16104">MNNLSKNDFLKLYRNILRCHKILQEPMRSMGDQYVKTEWKLHKKATPKQAIQFYEQWNIYCNILLTQRDSILKENSNNNDNYNNNNNDNNNDNNNFINIGQDLNEKQMKSLNKKQIEQLDKLKSETSTVYTPSDK</sequence>
<keyword id="KW-0143">Chaperone</keyword>
<keyword id="KW-0496">Mitochondrion</keyword>
<keyword id="KW-1185">Reference proteome</keyword>
<keyword id="KW-0809">Transit peptide</keyword>
<accession>Q86H49</accession>
<accession>Q553N5</accession>
<reference key="1">
    <citation type="journal article" date="2002" name="Nature">
        <title>Sequence and analysis of chromosome 2 of Dictyostelium discoideum.</title>
        <authorList>
            <person name="Gloeckner G."/>
            <person name="Eichinger L."/>
            <person name="Szafranski K."/>
            <person name="Pachebat J.A."/>
            <person name="Bankier A.T."/>
            <person name="Dear P.H."/>
            <person name="Lehmann R."/>
            <person name="Baumgart C."/>
            <person name="Parra G."/>
            <person name="Abril J.F."/>
            <person name="Guigo R."/>
            <person name="Kumpf K."/>
            <person name="Tunggal B."/>
            <person name="Cox E.C."/>
            <person name="Quail M.A."/>
            <person name="Platzer M."/>
            <person name="Rosenthal A."/>
            <person name="Noegel A.A."/>
        </authorList>
    </citation>
    <scope>NUCLEOTIDE SEQUENCE [LARGE SCALE GENOMIC DNA]</scope>
    <source>
        <strain>AX4</strain>
    </source>
</reference>
<reference key="2">
    <citation type="journal article" date="2005" name="Nature">
        <title>The genome of the social amoeba Dictyostelium discoideum.</title>
        <authorList>
            <person name="Eichinger L."/>
            <person name="Pachebat J.A."/>
            <person name="Gloeckner G."/>
            <person name="Rajandream M.A."/>
            <person name="Sucgang R."/>
            <person name="Berriman M."/>
            <person name="Song J."/>
            <person name="Olsen R."/>
            <person name="Szafranski K."/>
            <person name="Xu Q."/>
            <person name="Tunggal B."/>
            <person name="Kummerfeld S."/>
            <person name="Madera M."/>
            <person name="Konfortov B.A."/>
            <person name="Rivero F."/>
            <person name="Bankier A.T."/>
            <person name="Lehmann R."/>
            <person name="Hamlin N."/>
            <person name="Davies R."/>
            <person name="Gaudet P."/>
            <person name="Fey P."/>
            <person name="Pilcher K."/>
            <person name="Chen G."/>
            <person name="Saunders D."/>
            <person name="Sodergren E.J."/>
            <person name="Davis P."/>
            <person name="Kerhornou A."/>
            <person name="Nie X."/>
            <person name="Hall N."/>
            <person name="Anjard C."/>
            <person name="Hemphill L."/>
            <person name="Bason N."/>
            <person name="Farbrother P."/>
            <person name="Desany B."/>
            <person name="Just E."/>
            <person name="Morio T."/>
            <person name="Rost R."/>
            <person name="Churcher C.M."/>
            <person name="Cooper J."/>
            <person name="Haydock S."/>
            <person name="van Driessche N."/>
            <person name="Cronin A."/>
            <person name="Goodhead I."/>
            <person name="Muzny D.M."/>
            <person name="Mourier T."/>
            <person name="Pain A."/>
            <person name="Lu M."/>
            <person name="Harper D."/>
            <person name="Lindsay R."/>
            <person name="Hauser H."/>
            <person name="James K.D."/>
            <person name="Quiles M."/>
            <person name="Madan Babu M."/>
            <person name="Saito T."/>
            <person name="Buchrieser C."/>
            <person name="Wardroper A."/>
            <person name="Felder M."/>
            <person name="Thangavelu M."/>
            <person name="Johnson D."/>
            <person name="Knights A."/>
            <person name="Loulseged H."/>
            <person name="Mungall K.L."/>
            <person name="Oliver K."/>
            <person name="Price C."/>
            <person name="Quail M.A."/>
            <person name="Urushihara H."/>
            <person name="Hernandez J."/>
            <person name="Rabbinowitsch E."/>
            <person name="Steffen D."/>
            <person name="Sanders M."/>
            <person name="Ma J."/>
            <person name="Kohara Y."/>
            <person name="Sharp S."/>
            <person name="Simmonds M.N."/>
            <person name="Spiegler S."/>
            <person name="Tivey A."/>
            <person name="Sugano S."/>
            <person name="White B."/>
            <person name="Walker D."/>
            <person name="Woodward J.R."/>
            <person name="Winckler T."/>
            <person name="Tanaka Y."/>
            <person name="Shaulsky G."/>
            <person name="Schleicher M."/>
            <person name="Weinstock G.M."/>
            <person name="Rosenthal A."/>
            <person name="Cox E.C."/>
            <person name="Chisholm R.L."/>
            <person name="Gibbs R.A."/>
            <person name="Loomis W.F."/>
            <person name="Platzer M."/>
            <person name="Kay R.R."/>
            <person name="Williams J.G."/>
            <person name="Dear P.H."/>
            <person name="Noegel A.A."/>
            <person name="Barrell B.G."/>
            <person name="Kuspa A."/>
        </authorList>
    </citation>
    <scope>NUCLEOTIDE SEQUENCE [LARGE SCALE GENOMIC DNA]</scope>
    <source>
        <strain>AX4</strain>
    </source>
</reference>
<feature type="transit peptide" description="Mitochondrion" evidence="3">
    <location>
        <begin position="1"/>
        <end status="unknown"/>
    </location>
</feature>
<feature type="chain" id="PRO_0000328456" description="Succinate dehydrogenase assembly factor 3, mitochondrial">
    <location>
        <begin status="unknown"/>
        <end position="135"/>
    </location>
</feature>
<feature type="region of interest" description="Disordered" evidence="4">
    <location>
        <begin position="73"/>
        <end position="101"/>
    </location>
</feature>
<feature type="compositionally biased region" description="Low complexity" evidence="4">
    <location>
        <begin position="75"/>
        <end position="95"/>
    </location>
</feature>
<gene>
    <name type="primary">acn9</name>
    <name type="ORF">DDB_G0275645</name>
</gene>
<dbReference type="EMBL" id="AAFI02000013">
    <property type="protein sequence ID" value="EAL69573.1"/>
    <property type="molecule type" value="Genomic_DNA"/>
</dbReference>
<dbReference type="RefSeq" id="XP_643536.1">
    <property type="nucleotide sequence ID" value="XM_638444.1"/>
</dbReference>
<dbReference type="SMR" id="Q86H49"/>
<dbReference type="STRING" id="44689.Q86H49"/>
<dbReference type="PaxDb" id="44689-DDB0266582"/>
<dbReference type="EnsemblProtists" id="EAL69573">
    <property type="protein sequence ID" value="EAL69573"/>
    <property type="gene ID" value="DDB_G0275645"/>
</dbReference>
<dbReference type="GeneID" id="8620118"/>
<dbReference type="KEGG" id="ddi:DDB_G0275645"/>
<dbReference type="dictyBase" id="DDB_G0275645">
    <property type="gene designation" value="acn9"/>
</dbReference>
<dbReference type="VEuPathDB" id="AmoebaDB:DDB_G0275645"/>
<dbReference type="eggNOG" id="KOG4100">
    <property type="taxonomic scope" value="Eukaryota"/>
</dbReference>
<dbReference type="HOGENOM" id="CLU_102310_2_2_1"/>
<dbReference type="InParanoid" id="Q86H49"/>
<dbReference type="OMA" id="WAIYIEE"/>
<dbReference type="PhylomeDB" id="Q86H49"/>
<dbReference type="PRO" id="PR:Q86H49"/>
<dbReference type="Proteomes" id="UP000002195">
    <property type="component" value="Chromosome 2"/>
</dbReference>
<dbReference type="GO" id="GO:0005758">
    <property type="term" value="C:mitochondrial intermembrane space"/>
    <property type="evidence" value="ECO:0000318"/>
    <property type="project" value="GO_Central"/>
</dbReference>
<dbReference type="GO" id="GO:0005759">
    <property type="term" value="C:mitochondrial matrix"/>
    <property type="evidence" value="ECO:0007669"/>
    <property type="project" value="UniProtKB-SubCell"/>
</dbReference>
<dbReference type="GO" id="GO:0034553">
    <property type="term" value="P:mitochondrial respiratory chain complex II assembly"/>
    <property type="evidence" value="ECO:0000318"/>
    <property type="project" value="GO_Central"/>
</dbReference>
<dbReference type="GO" id="GO:0006105">
    <property type="term" value="P:succinate metabolic process"/>
    <property type="evidence" value="ECO:0000318"/>
    <property type="project" value="GO_Central"/>
</dbReference>
<dbReference type="CDD" id="cd20270">
    <property type="entry name" value="Complex1_LYR_SDHAF3_LYRM10"/>
    <property type="match status" value="1"/>
</dbReference>
<dbReference type="InterPro" id="IPR008381">
    <property type="entry name" value="SDHAF3/Sdh7"/>
</dbReference>
<dbReference type="PANTHER" id="PTHR13137">
    <property type="entry name" value="DC11 ACN9 HOMOLOG"/>
    <property type="match status" value="1"/>
</dbReference>
<dbReference type="PANTHER" id="PTHR13137:SF6">
    <property type="entry name" value="SUCCINATE DEHYDROGENASE ASSEMBLY FACTOR 3, MITOCHONDRIAL"/>
    <property type="match status" value="1"/>
</dbReference>
<dbReference type="Pfam" id="PF13233">
    <property type="entry name" value="Complex1_LYR_2"/>
    <property type="match status" value="1"/>
</dbReference>
<comment type="function">
    <text evidence="1 2">Plays an essential role in the assembly of succinate dehydrogenase (SDH), an enzyme complex (also referred to as respiratory complex II) that is a component of both the tricarboxylic acid (TCA) cycle and the mitochondrial electron transport chain, and which couples the oxidation of succinate to fumarate with the reduction of ubiquinone (coenzyme Q) to ubiquinol. Promotes maturation of the iron-sulfur protein subunit of the SDH catalytic dimer, protecting it from the deleterious effects of oxidants. May act together with SDHAF1.</text>
</comment>
<comment type="subunit">
    <text evidence="1">Interacts with the iron-sulfur protein subunit within the SDH catalytic dimer.</text>
</comment>
<comment type="subcellular location">
    <subcellularLocation>
        <location evidence="1">Mitochondrion matrix</location>
    </subcellularLocation>
</comment>
<comment type="similarity">
    <text evidence="5">Belongs to the complex I LYR family. SDHAF3 subfamily.</text>
</comment>
<organism>
    <name type="scientific">Dictyostelium discoideum</name>
    <name type="common">Social amoeba</name>
    <dbReference type="NCBI Taxonomy" id="44689"/>
    <lineage>
        <taxon>Eukaryota</taxon>
        <taxon>Amoebozoa</taxon>
        <taxon>Evosea</taxon>
        <taxon>Eumycetozoa</taxon>
        <taxon>Dictyostelia</taxon>
        <taxon>Dictyosteliales</taxon>
        <taxon>Dictyosteliaceae</taxon>
        <taxon>Dictyostelium</taxon>
    </lineage>
</organism>